<feature type="chain" id="PRO_0000338519" description="DNA mismatch repair protein MSH3">
    <location>
        <begin position="1"/>
        <end position="1191"/>
    </location>
</feature>
<feature type="region of interest" description="Disordered" evidence="3">
    <location>
        <begin position="1"/>
        <end position="82"/>
    </location>
</feature>
<feature type="region of interest" description="Disordered" evidence="3">
    <location>
        <begin position="118"/>
        <end position="148"/>
    </location>
</feature>
<feature type="region of interest" description="Disordered" evidence="3">
    <location>
        <begin position="175"/>
        <end position="203"/>
    </location>
</feature>
<feature type="region of interest" description="Mispair-binding domain" evidence="1">
    <location>
        <begin position="233"/>
        <end position="347"/>
    </location>
</feature>
<feature type="compositionally biased region" description="Polar residues" evidence="3">
    <location>
        <begin position="1"/>
        <end position="11"/>
    </location>
</feature>
<feature type="compositionally biased region" description="Polar residues" evidence="3">
    <location>
        <begin position="54"/>
        <end position="65"/>
    </location>
</feature>
<feature type="compositionally biased region" description="Low complexity" evidence="3">
    <location>
        <begin position="122"/>
        <end position="135"/>
    </location>
</feature>
<feature type="compositionally biased region" description="Basic and acidic residues" evidence="3">
    <location>
        <begin position="139"/>
        <end position="148"/>
    </location>
</feature>
<feature type="compositionally biased region" description="Basic and acidic residues" evidence="3">
    <location>
        <begin position="193"/>
        <end position="203"/>
    </location>
</feature>
<feature type="binding site" evidence="2">
    <location>
        <begin position="950"/>
        <end position="957"/>
    </location>
    <ligand>
        <name>ATP</name>
        <dbReference type="ChEBI" id="CHEBI:30616"/>
    </ligand>
</feature>
<dbReference type="EMBL" id="AE017343">
    <property type="protein sequence ID" value="AAW42187.1"/>
    <property type="molecule type" value="Genomic_DNA"/>
</dbReference>
<dbReference type="RefSeq" id="XP_569494.1">
    <property type="nucleotide sequence ID" value="XM_569494.1"/>
</dbReference>
<dbReference type="SMR" id="P0CO92"/>
<dbReference type="FunCoup" id="P0CO92">
    <property type="interactions" value="555"/>
</dbReference>
<dbReference type="STRING" id="214684.P0CO92"/>
<dbReference type="PaxDb" id="214684-P0CO92"/>
<dbReference type="EnsemblFungi" id="AAW42187">
    <property type="protein sequence ID" value="AAW42187"/>
    <property type="gene ID" value="CNC01550"/>
</dbReference>
<dbReference type="VEuPathDB" id="FungiDB:CNC01550"/>
<dbReference type="eggNOG" id="KOG0218">
    <property type="taxonomic scope" value="Eukaryota"/>
</dbReference>
<dbReference type="HOGENOM" id="CLU_002472_0_2_1"/>
<dbReference type="InParanoid" id="P0CO92"/>
<dbReference type="OMA" id="INMHAAR"/>
<dbReference type="OrthoDB" id="121051at2759"/>
<dbReference type="Proteomes" id="UP000002149">
    <property type="component" value="Chromosome 3"/>
</dbReference>
<dbReference type="GO" id="GO:0005634">
    <property type="term" value="C:nucleus"/>
    <property type="evidence" value="ECO:0000318"/>
    <property type="project" value="GO_Central"/>
</dbReference>
<dbReference type="GO" id="GO:0005524">
    <property type="term" value="F:ATP binding"/>
    <property type="evidence" value="ECO:0007669"/>
    <property type="project" value="UniProtKB-KW"/>
</dbReference>
<dbReference type="GO" id="GO:0140664">
    <property type="term" value="F:ATP-dependent DNA damage sensor activity"/>
    <property type="evidence" value="ECO:0007669"/>
    <property type="project" value="InterPro"/>
</dbReference>
<dbReference type="GO" id="GO:0003690">
    <property type="term" value="F:double-stranded DNA binding"/>
    <property type="evidence" value="ECO:0000318"/>
    <property type="project" value="GO_Central"/>
</dbReference>
<dbReference type="GO" id="GO:0030983">
    <property type="term" value="F:mismatched DNA binding"/>
    <property type="evidence" value="ECO:0007669"/>
    <property type="project" value="InterPro"/>
</dbReference>
<dbReference type="GO" id="GO:0006298">
    <property type="term" value="P:mismatch repair"/>
    <property type="evidence" value="ECO:0000318"/>
    <property type="project" value="GO_Central"/>
</dbReference>
<dbReference type="GO" id="GO:0006312">
    <property type="term" value="P:mitotic recombination"/>
    <property type="evidence" value="ECO:0000318"/>
    <property type="project" value="GO_Central"/>
</dbReference>
<dbReference type="CDD" id="cd03287">
    <property type="entry name" value="ABC_MSH3_euk"/>
    <property type="match status" value="1"/>
</dbReference>
<dbReference type="FunFam" id="1.10.1420.10:FF:000037">
    <property type="entry name" value="DNA mismatch repair protein"/>
    <property type="match status" value="1"/>
</dbReference>
<dbReference type="FunFam" id="3.40.1170.10:FF:000004">
    <property type="entry name" value="DNA mismatch repair protein"/>
    <property type="match status" value="1"/>
</dbReference>
<dbReference type="Gene3D" id="1.10.1420.10">
    <property type="match status" value="2"/>
</dbReference>
<dbReference type="Gene3D" id="3.40.1170.10">
    <property type="entry name" value="DNA repair protein MutS, domain I"/>
    <property type="match status" value="1"/>
</dbReference>
<dbReference type="Gene3D" id="3.30.420.110">
    <property type="entry name" value="MutS, connector domain"/>
    <property type="match status" value="1"/>
</dbReference>
<dbReference type="Gene3D" id="3.40.50.300">
    <property type="entry name" value="P-loop containing nucleotide triphosphate hydrolases"/>
    <property type="match status" value="1"/>
</dbReference>
<dbReference type="InterPro" id="IPR007695">
    <property type="entry name" value="DNA_mismatch_repair_MutS-lik_N"/>
</dbReference>
<dbReference type="InterPro" id="IPR000432">
    <property type="entry name" value="DNA_mismatch_repair_MutS_C"/>
</dbReference>
<dbReference type="InterPro" id="IPR007861">
    <property type="entry name" value="DNA_mismatch_repair_MutS_clamp"/>
</dbReference>
<dbReference type="InterPro" id="IPR007696">
    <property type="entry name" value="DNA_mismatch_repair_MutS_core"/>
</dbReference>
<dbReference type="InterPro" id="IPR016151">
    <property type="entry name" value="DNA_mismatch_repair_MutS_N"/>
</dbReference>
<dbReference type="InterPro" id="IPR036187">
    <property type="entry name" value="DNA_mismatch_repair_MutS_sf"/>
</dbReference>
<dbReference type="InterPro" id="IPR007860">
    <property type="entry name" value="DNA_mmatch_repair_MutS_con_dom"/>
</dbReference>
<dbReference type="InterPro" id="IPR045076">
    <property type="entry name" value="MutS"/>
</dbReference>
<dbReference type="InterPro" id="IPR036678">
    <property type="entry name" value="MutS_con_dom_sf"/>
</dbReference>
<dbReference type="InterPro" id="IPR027417">
    <property type="entry name" value="P-loop_NTPase"/>
</dbReference>
<dbReference type="PANTHER" id="PTHR11361:SF122">
    <property type="entry name" value="DNA MISMATCH REPAIR PROTEIN MSH3"/>
    <property type="match status" value="1"/>
</dbReference>
<dbReference type="PANTHER" id="PTHR11361">
    <property type="entry name" value="DNA MISMATCH REPAIR PROTEIN MUTS FAMILY MEMBER"/>
    <property type="match status" value="1"/>
</dbReference>
<dbReference type="Pfam" id="PF01624">
    <property type="entry name" value="MutS_I"/>
    <property type="match status" value="1"/>
</dbReference>
<dbReference type="Pfam" id="PF05188">
    <property type="entry name" value="MutS_II"/>
    <property type="match status" value="1"/>
</dbReference>
<dbReference type="Pfam" id="PF05192">
    <property type="entry name" value="MutS_III"/>
    <property type="match status" value="1"/>
</dbReference>
<dbReference type="Pfam" id="PF05190">
    <property type="entry name" value="MutS_IV"/>
    <property type="match status" value="1"/>
</dbReference>
<dbReference type="Pfam" id="PF00488">
    <property type="entry name" value="MutS_V"/>
    <property type="match status" value="1"/>
</dbReference>
<dbReference type="SMART" id="SM00534">
    <property type="entry name" value="MUTSac"/>
    <property type="match status" value="1"/>
</dbReference>
<dbReference type="SMART" id="SM00533">
    <property type="entry name" value="MUTSd"/>
    <property type="match status" value="1"/>
</dbReference>
<dbReference type="SUPFAM" id="SSF55271">
    <property type="entry name" value="DNA repair protein MutS, domain I"/>
    <property type="match status" value="1"/>
</dbReference>
<dbReference type="SUPFAM" id="SSF48334">
    <property type="entry name" value="DNA repair protein MutS, domain III"/>
    <property type="match status" value="1"/>
</dbReference>
<dbReference type="SUPFAM" id="SSF52540">
    <property type="entry name" value="P-loop containing nucleoside triphosphate hydrolases"/>
    <property type="match status" value="1"/>
</dbReference>
<dbReference type="PROSITE" id="PS00486">
    <property type="entry name" value="DNA_MISMATCH_REPAIR_2"/>
    <property type="match status" value="1"/>
</dbReference>
<protein>
    <recommendedName>
        <fullName>DNA mismatch repair protein MSH3</fullName>
    </recommendedName>
    <alternativeName>
        <fullName>MutS protein homolog 3</fullName>
    </alternativeName>
</protein>
<organism>
    <name type="scientific">Cryptococcus neoformans var. neoformans serotype D (strain JEC21 / ATCC MYA-565)</name>
    <name type="common">Filobasidiella neoformans</name>
    <dbReference type="NCBI Taxonomy" id="214684"/>
    <lineage>
        <taxon>Eukaryota</taxon>
        <taxon>Fungi</taxon>
        <taxon>Dikarya</taxon>
        <taxon>Basidiomycota</taxon>
        <taxon>Agaricomycotina</taxon>
        <taxon>Tremellomycetes</taxon>
        <taxon>Tremellales</taxon>
        <taxon>Cryptococcaceae</taxon>
        <taxon>Cryptococcus</taxon>
        <taxon>Cryptococcus neoformans species complex</taxon>
    </lineage>
</organism>
<keyword id="KW-0067">ATP-binding</keyword>
<keyword id="KW-0227">DNA damage</keyword>
<keyword id="KW-0234">DNA repair</keyword>
<keyword id="KW-0238">DNA-binding</keyword>
<keyword id="KW-0547">Nucleotide-binding</keyword>
<keyword id="KW-0539">Nucleus</keyword>
<keyword id="KW-1185">Reference proteome</keyword>
<comment type="function">
    <text evidence="1">Component of the post-replicative DNA mismatch repair system (MMR). Heterodimerizes with MSH2 to form MutS beta, which binds to DNA mismatches thereby initiating DNA repair. MSH3 provides substrate-binding and substrate specificity to the complex. When bound, the MutS beta heterodimer bends the DNA helix and shields approximately 20 base pairs. Acts mainly to repair insertion-deletion loops (IDLs) from 2 to 13 nucleotides in size, but can also repair base-base and single insertion-deletion mismatches that occur during replication. After mismatch binding, forms a ternary complex with the MutL alpha heterodimer, which is thought to be responsible for directing the downstream MMR events, including strand discrimination, excision, and resynthesis. ATP binding and hydrolysis play a pivotal role in mismatch repair functions (By similarity).</text>
</comment>
<comment type="subunit">
    <text evidence="1">Heterodimer consisting of MSH2-MSH3 (MutS beta). Forms a ternary complex with MutL alpha (MLH1-PMS1) (By similarity).</text>
</comment>
<comment type="subcellular location">
    <subcellularLocation>
        <location evidence="1">Nucleus</location>
    </subcellularLocation>
</comment>
<comment type="similarity">
    <text evidence="4">Belongs to the DNA mismatch repair MutS family. MSH3 subfamily.</text>
</comment>
<gene>
    <name type="primary">MSH3</name>
    <name type="ordered locus">CNC01550</name>
</gene>
<evidence type="ECO:0000250" key="1"/>
<evidence type="ECO:0000255" key="2"/>
<evidence type="ECO:0000256" key="3">
    <source>
        <dbReference type="SAM" id="MobiDB-lite"/>
    </source>
</evidence>
<evidence type="ECO:0000305" key="4"/>
<name>MSH3_CRYNJ</name>
<accession>P0CO92</accession>
<accession>Q55VB4</accession>
<accession>Q5KKX1</accession>
<reference key="1">
    <citation type="journal article" date="2005" name="Science">
        <title>The genome of the basidiomycetous yeast and human pathogen Cryptococcus neoformans.</title>
        <authorList>
            <person name="Loftus B.J."/>
            <person name="Fung E."/>
            <person name="Roncaglia P."/>
            <person name="Rowley D."/>
            <person name="Amedeo P."/>
            <person name="Bruno D."/>
            <person name="Vamathevan J."/>
            <person name="Miranda M."/>
            <person name="Anderson I.J."/>
            <person name="Fraser J.A."/>
            <person name="Allen J.E."/>
            <person name="Bosdet I.E."/>
            <person name="Brent M.R."/>
            <person name="Chiu R."/>
            <person name="Doering T.L."/>
            <person name="Donlin M.J."/>
            <person name="D'Souza C.A."/>
            <person name="Fox D.S."/>
            <person name="Grinberg V."/>
            <person name="Fu J."/>
            <person name="Fukushima M."/>
            <person name="Haas B.J."/>
            <person name="Huang J.C."/>
            <person name="Janbon G."/>
            <person name="Jones S.J.M."/>
            <person name="Koo H.L."/>
            <person name="Krzywinski M.I."/>
            <person name="Kwon-Chung K.J."/>
            <person name="Lengeler K.B."/>
            <person name="Maiti R."/>
            <person name="Marra M.A."/>
            <person name="Marra R.E."/>
            <person name="Mathewson C.A."/>
            <person name="Mitchell T.G."/>
            <person name="Pertea M."/>
            <person name="Riggs F.R."/>
            <person name="Salzberg S.L."/>
            <person name="Schein J.E."/>
            <person name="Shvartsbeyn A."/>
            <person name="Shin H."/>
            <person name="Shumway M."/>
            <person name="Specht C.A."/>
            <person name="Suh B.B."/>
            <person name="Tenney A."/>
            <person name="Utterback T.R."/>
            <person name="Wickes B.L."/>
            <person name="Wortman J.R."/>
            <person name="Wye N.H."/>
            <person name="Kronstad J.W."/>
            <person name="Lodge J.K."/>
            <person name="Heitman J."/>
            <person name="Davis R.W."/>
            <person name="Fraser C.M."/>
            <person name="Hyman R.W."/>
        </authorList>
    </citation>
    <scope>NUCLEOTIDE SEQUENCE [LARGE SCALE GENOMIC DNA]</scope>
    <source>
        <strain>JEC21 / ATCC MYA-565</strain>
    </source>
</reference>
<sequence length="1191" mass="132687">MPSEGSQQPSLDSFFKRKNPRVEPYSRTGNNAIIDLTDSPPNKKIKLDDEGSQKNRSMTQTSSSYFKGHPTARPLSVDKRLPRKPSAAIQAYKLQDVIPPQPSHSGLAFETCSLVPQASFVPDSQPEPSASPAPQRTTEQLKRHEEWKTRILAMSGSFRRKRSLALDEAVAAEAREAAGLEDEGTPFDGSDGDDYKSESEKNAEEVGKQLKKYVAKELAGKGKSKGKKKEEIGPSGLAYTPLEKQFMEIKEQNRDVLLLMEVGYKYKFHGEDAKTASRELGIVAFPNRNFFTASIPTHRLHIHVKKLLSLGYKVGVITQTETAALKKIGDNRNAPFARKLTHLFTAATYVEDPSLSSSSSSSSSVRFDDPVVPGTAPPPTNALVAIVEQPVDRASDDRVKVGLVCVVPGTGDITWDEFDDSQIRTELETRLAHLSPAELLLPKQRLSKATEKVLTYFAGEPKHRGRNAVRIERIDNIPEYDAAFDFLTNFYHCKEHKATVSKGDVNDERHLMTEGNKQWSLQPKLSQDGADISLDEEIYLASGVSSSKAILTLVDFPKQVVISMAVAIRYMKRFGLENAFKHTSSFVRFANRSHMLLSSNTLANLEIYQNQTDGGLYGSLIWLLDHCKTRMGKRLLREWVGRPLLDVAALKARADAIEEIMENNSYHMEKLRSLLINMPDLVRGLTRVQYGKATPNELATLLITLVRLASEFKPNMGNVFRSCLLNNIPNTLPTILDTSQRFLNALNLKQARENDVANLWADPDRFPDIQDVKDCISVCEMELNEHLMELRKILKKPTLRYITVSGIEYLVEVPIRDTKIVPAQWMKISATRTVNRYHTPKILAITKERTQHLEKLSIVAREAFIAFQSEVAEYHELVVVSKQIAVIDCLMSLAQTAAASGYCKPKFVAEPELKILAGRHPMVEMLREESYVPFDIHFSKEEGTTKIITGPNMAGKSSTVRAMALIVCMAQIGSFVPAASVTLSVHDSVQTRMGASDEIGRGKSTFMVELSETSDILQTITPRSLVVLDELGRGTSTYDGIAIAYATLSHIAEIGCNTLFVTHYPTVAQDLAREKPDKISNWHMSFDEIQMPDGGAEITFLYQLTRGLQEASFGVWCARLAGLPKPILDTAQMRSSSLKAETQERLRGIVARRVGWMLHNLFDNKTSSSQVLRNVEMLHNSLSSSSISFSQ</sequence>
<proteinExistence type="inferred from homology"/>